<reference key="1">
    <citation type="journal article" date="1994" name="J. Bacteriol.">
        <title>The identification of cryptic rhamnose biosynthesis genes in Neisseria gonorrhoeae and their relationship to lipopolysaccharide biosynthesis.</title>
        <authorList>
            <person name="Robertson B.D."/>
            <person name="Frosch M."/>
            <person name="van Putten J.P.M."/>
        </authorList>
    </citation>
    <scope>NUCLEOTIDE SEQUENCE [GENOMIC DNA]</scope>
    <source>
        <strain>MS11</strain>
    </source>
</reference>
<comment type="function">
    <text evidence="2">Catalyzes the dehydration of dTDP-D-glucose to form dTDP-6-deoxy-D-xylo-4-hexulose via a three-step process involving oxidation, dehydration and reduction.</text>
</comment>
<comment type="catalytic activity">
    <reaction evidence="2">
        <text>dTDP-alpha-D-glucose = dTDP-4-dehydro-6-deoxy-alpha-D-glucose + H2O</text>
        <dbReference type="Rhea" id="RHEA:17221"/>
        <dbReference type="ChEBI" id="CHEBI:15377"/>
        <dbReference type="ChEBI" id="CHEBI:57477"/>
        <dbReference type="ChEBI" id="CHEBI:57649"/>
        <dbReference type="EC" id="4.2.1.46"/>
    </reaction>
</comment>
<comment type="cofactor">
    <cofactor evidence="2">
        <name>NAD(+)</name>
        <dbReference type="ChEBI" id="CHEBI:57540"/>
    </cofactor>
    <text evidence="2">Binds 1 NAD(+) per subunit.</text>
</comment>
<comment type="pathway">
    <text evidence="3">Carbohydrate biosynthesis; dTDP-L-rhamnose biosynthesis.</text>
</comment>
<comment type="pathway">
    <text evidence="3">Bacterial outer membrane biogenesis; LPS O-antigen biosynthesis.</text>
</comment>
<comment type="subunit">
    <text evidence="2">Homodimer.</text>
</comment>
<comment type="similarity">
    <text evidence="2">Belongs to the NAD(P)-dependent epimerase/dehydratase family. dTDP-glucose dehydratase subfamily.</text>
</comment>
<keyword id="KW-0448">Lipopolysaccharide biosynthesis</keyword>
<keyword id="KW-0456">Lyase</keyword>
<keyword id="KW-0520">NAD</keyword>
<sequence>MQTEGKKNILVTGGAGFIGSAVVRHIIQNTRDSVVNLDKLTYAGNLESLTDIADNPRYAFEQVDICDRAELDRVFAQYRPDAVMHLAAESHVDRAIGSAGEFIRTNIVGTFDLLEAARAYWQQMPSEKREAFRFHHISTDEVYGDLHGTDDLFTETTPYAPSSPYSASKAAADHLVRAWQRTYRLPSIVSNCSNNYGPRQFPEKLIPLMILNALSGKPLPVYGDGAQIRDWLFVEDHARALYQVVTEGVVGETYNIGGHNEKTNLEVVKTICALLEELAPEKPAGVARYEDLITFVQDRPGHDARYAVDAAKIRRDLGWLPLETFESGLRKTVQWYLDNKTRRQNA</sequence>
<accession>P37761</accession>
<evidence type="ECO:0000250" key="1">
    <source>
        <dbReference type="UniProtKB" id="P26391"/>
    </source>
</evidence>
<evidence type="ECO:0000250" key="2">
    <source>
        <dbReference type="UniProtKB" id="P27830"/>
    </source>
</evidence>
<evidence type="ECO:0000250" key="3">
    <source>
        <dbReference type="UniProtKB" id="P37759"/>
    </source>
</evidence>
<evidence type="ECO:0000303" key="4">
    <source>
    </source>
</evidence>
<proteinExistence type="inferred from homology"/>
<protein>
    <recommendedName>
        <fullName evidence="2">dTDP-glucose 4,6-dehydratase</fullName>
        <ecNumber evidence="2">4.2.1.46</ecNumber>
    </recommendedName>
</protein>
<feature type="chain" id="PRO_0000183240" description="dTDP-glucose 4,6-dehydratase">
    <location>
        <begin position="1"/>
        <end position="346"/>
    </location>
</feature>
<feature type="active site" description="Proton donor" evidence="2">
    <location>
        <position position="140"/>
    </location>
</feature>
<feature type="active site" description="Proton acceptor" evidence="2">
    <location>
        <position position="141"/>
    </location>
</feature>
<feature type="active site" description="Proton acceptor" evidence="2">
    <location>
        <position position="165"/>
    </location>
</feature>
<feature type="binding site" evidence="2">
    <location>
        <begin position="17"/>
        <end position="18"/>
    </location>
    <ligand>
        <name>NAD(+)</name>
        <dbReference type="ChEBI" id="CHEBI:57540"/>
    </ligand>
</feature>
<feature type="binding site" evidence="2">
    <location>
        <begin position="38"/>
        <end position="41"/>
    </location>
    <ligand>
        <name>NAD(+)</name>
        <dbReference type="ChEBI" id="CHEBI:57540"/>
    </ligand>
</feature>
<feature type="binding site" evidence="2">
    <location>
        <begin position="64"/>
        <end position="65"/>
    </location>
    <ligand>
        <name>NAD(+)</name>
        <dbReference type="ChEBI" id="CHEBI:57540"/>
    </ligand>
</feature>
<feature type="binding site" evidence="2">
    <location>
        <begin position="86"/>
        <end position="90"/>
    </location>
    <ligand>
        <name>NAD(+)</name>
        <dbReference type="ChEBI" id="CHEBI:57540"/>
    </ligand>
</feature>
<feature type="binding site" evidence="1">
    <location>
        <position position="90"/>
    </location>
    <ligand>
        <name>substrate</name>
    </ligand>
</feature>
<feature type="binding site" evidence="2">
    <location>
        <position position="105"/>
    </location>
    <ligand>
        <name>NAD(+)</name>
        <dbReference type="ChEBI" id="CHEBI:57540"/>
    </ligand>
</feature>
<feature type="binding site" evidence="1">
    <location>
        <position position="139"/>
    </location>
    <ligand>
        <name>substrate</name>
    </ligand>
</feature>
<feature type="binding site" evidence="2">
    <location>
        <begin position="165"/>
        <end position="169"/>
    </location>
    <ligand>
        <name>NAD(+)</name>
        <dbReference type="ChEBI" id="CHEBI:57540"/>
    </ligand>
</feature>
<feature type="binding site" evidence="1">
    <location>
        <position position="194"/>
    </location>
    <ligand>
        <name>substrate</name>
    </ligand>
</feature>
<feature type="binding site" evidence="2">
    <location>
        <position position="195"/>
    </location>
    <ligand>
        <name>NAD(+)</name>
        <dbReference type="ChEBI" id="CHEBI:57540"/>
    </ligand>
</feature>
<feature type="binding site" evidence="1">
    <location>
        <begin position="204"/>
        <end position="205"/>
    </location>
    <ligand>
        <name>substrate</name>
    </ligand>
</feature>
<feature type="binding site" evidence="1">
    <location>
        <begin position="220"/>
        <end position="222"/>
    </location>
    <ligand>
        <name>substrate</name>
    </ligand>
</feature>
<feature type="binding site" evidence="1">
    <location>
        <position position="229"/>
    </location>
    <ligand>
        <name>substrate</name>
    </ligand>
</feature>
<feature type="binding site" evidence="1">
    <location>
        <position position="264"/>
    </location>
    <ligand>
        <name>substrate</name>
    </ligand>
</feature>
<feature type="binding site" evidence="1">
    <location>
        <begin position="298"/>
        <end position="302"/>
    </location>
    <ligand>
        <name>substrate</name>
    </ligand>
</feature>
<gene>
    <name evidence="4" type="primary">rfbB</name>
</gene>
<organism>
    <name type="scientific">Neisseria gonorrhoeae</name>
    <dbReference type="NCBI Taxonomy" id="485"/>
    <lineage>
        <taxon>Bacteria</taxon>
        <taxon>Pseudomonadati</taxon>
        <taxon>Pseudomonadota</taxon>
        <taxon>Betaproteobacteria</taxon>
        <taxon>Neisseriales</taxon>
        <taxon>Neisseriaceae</taxon>
        <taxon>Neisseria</taxon>
    </lineage>
</organism>
<dbReference type="EC" id="4.2.1.46" evidence="2"/>
<dbReference type="EMBL" id="Z32742">
    <property type="protein sequence ID" value="CAA83652.1"/>
    <property type="molecule type" value="Genomic_DNA"/>
</dbReference>
<dbReference type="EMBL" id="Z21508">
    <property type="protein sequence ID" value="CAA79718.1"/>
    <property type="molecule type" value="Genomic_DNA"/>
</dbReference>
<dbReference type="PIR" id="S47045">
    <property type="entry name" value="S47045"/>
</dbReference>
<dbReference type="SMR" id="P37761"/>
<dbReference type="UniPathway" id="UPA00124"/>
<dbReference type="UniPathway" id="UPA00281"/>
<dbReference type="GO" id="GO:0008460">
    <property type="term" value="F:dTDP-glucose 4,6-dehydratase activity"/>
    <property type="evidence" value="ECO:0000250"/>
    <property type="project" value="UniProtKB"/>
</dbReference>
<dbReference type="GO" id="GO:0019305">
    <property type="term" value="P:dTDP-rhamnose biosynthetic process"/>
    <property type="evidence" value="ECO:0007669"/>
    <property type="project" value="UniProtKB-UniPathway"/>
</dbReference>
<dbReference type="GO" id="GO:0009103">
    <property type="term" value="P:lipopolysaccharide biosynthetic process"/>
    <property type="evidence" value="ECO:0000250"/>
    <property type="project" value="UniProtKB"/>
</dbReference>
<dbReference type="GO" id="GO:0009243">
    <property type="term" value="P:O antigen biosynthetic process"/>
    <property type="evidence" value="ECO:0007669"/>
    <property type="project" value="UniProtKB-UniPathway"/>
</dbReference>
<dbReference type="GO" id="GO:0000271">
    <property type="term" value="P:polysaccharide biosynthetic process"/>
    <property type="evidence" value="ECO:0000250"/>
    <property type="project" value="UniProtKB"/>
</dbReference>
<dbReference type="CDD" id="cd05246">
    <property type="entry name" value="dTDP_GD_SDR_e"/>
    <property type="match status" value="1"/>
</dbReference>
<dbReference type="FunFam" id="3.40.50.720:FF:000108">
    <property type="entry name" value="dTDP-glucose 4,6-dehydratase"/>
    <property type="match status" value="1"/>
</dbReference>
<dbReference type="Gene3D" id="3.40.50.720">
    <property type="entry name" value="NAD(P)-binding Rossmann-like Domain"/>
    <property type="match status" value="1"/>
</dbReference>
<dbReference type="Gene3D" id="3.90.25.10">
    <property type="entry name" value="UDP-galactose 4-epimerase, domain 1"/>
    <property type="match status" value="1"/>
</dbReference>
<dbReference type="InterPro" id="IPR005888">
    <property type="entry name" value="dTDP_Gluc_deHydtase"/>
</dbReference>
<dbReference type="InterPro" id="IPR016040">
    <property type="entry name" value="NAD(P)-bd_dom"/>
</dbReference>
<dbReference type="InterPro" id="IPR036291">
    <property type="entry name" value="NAD(P)-bd_dom_sf"/>
</dbReference>
<dbReference type="NCBIfam" id="TIGR01181">
    <property type="entry name" value="dTDP_gluc_dehyt"/>
    <property type="match status" value="1"/>
</dbReference>
<dbReference type="PANTHER" id="PTHR43000">
    <property type="entry name" value="DTDP-D-GLUCOSE 4,6-DEHYDRATASE-RELATED"/>
    <property type="match status" value="1"/>
</dbReference>
<dbReference type="Pfam" id="PF16363">
    <property type="entry name" value="GDP_Man_Dehyd"/>
    <property type="match status" value="1"/>
</dbReference>
<dbReference type="SUPFAM" id="SSF51735">
    <property type="entry name" value="NAD(P)-binding Rossmann-fold domains"/>
    <property type="match status" value="1"/>
</dbReference>
<name>RMLB_NEIGO</name>